<comment type="function">
    <text evidence="1">Catalyzes the oxidation of either pyridoxine 5'-phosphate (PNP) or pyridoxamine 5'-phosphate (PMP) into pyridoxal 5'-phosphate (PLP).</text>
</comment>
<comment type="catalytic activity">
    <reaction evidence="1">
        <text>pyridoxamine 5'-phosphate + O2 + H2O = pyridoxal 5'-phosphate + H2O2 + NH4(+)</text>
        <dbReference type="Rhea" id="RHEA:15817"/>
        <dbReference type="ChEBI" id="CHEBI:15377"/>
        <dbReference type="ChEBI" id="CHEBI:15379"/>
        <dbReference type="ChEBI" id="CHEBI:16240"/>
        <dbReference type="ChEBI" id="CHEBI:28938"/>
        <dbReference type="ChEBI" id="CHEBI:58451"/>
        <dbReference type="ChEBI" id="CHEBI:597326"/>
        <dbReference type="EC" id="1.4.3.5"/>
    </reaction>
</comment>
<comment type="catalytic activity">
    <reaction evidence="1">
        <text>pyridoxine 5'-phosphate + O2 = pyridoxal 5'-phosphate + H2O2</text>
        <dbReference type="Rhea" id="RHEA:15149"/>
        <dbReference type="ChEBI" id="CHEBI:15379"/>
        <dbReference type="ChEBI" id="CHEBI:16240"/>
        <dbReference type="ChEBI" id="CHEBI:58589"/>
        <dbReference type="ChEBI" id="CHEBI:597326"/>
        <dbReference type="EC" id="1.4.3.5"/>
    </reaction>
</comment>
<comment type="cofactor">
    <cofactor evidence="1">
        <name>FMN</name>
        <dbReference type="ChEBI" id="CHEBI:58210"/>
    </cofactor>
    <text evidence="1">Binds 1 FMN per subunit.</text>
</comment>
<comment type="pathway">
    <text evidence="1">Cofactor metabolism; pyridoxal 5'-phosphate salvage; pyridoxal 5'-phosphate from pyridoxamine 5'-phosphate: step 1/1.</text>
</comment>
<comment type="pathway">
    <text evidence="1">Cofactor metabolism; pyridoxal 5'-phosphate salvage; pyridoxal 5'-phosphate from pyridoxine 5'-phosphate: step 1/1.</text>
</comment>
<comment type="subunit">
    <text evidence="1">Homodimer.</text>
</comment>
<comment type="similarity">
    <text evidence="1">Belongs to the pyridoxamine 5'-phosphate oxidase family.</text>
</comment>
<organism>
    <name type="scientific">Rhodopseudomonas palustris (strain HaA2)</name>
    <dbReference type="NCBI Taxonomy" id="316058"/>
    <lineage>
        <taxon>Bacteria</taxon>
        <taxon>Pseudomonadati</taxon>
        <taxon>Pseudomonadota</taxon>
        <taxon>Alphaproteobacteria</taxon>
        <taxon>Hyphomicrobiales</taxon>
        <taxon>Nitrobacteraceae</taxon>
        <taxon>Rhodopseudomonas</taxon>
    </lineage>
</organism>
<gene>
    <name evidence="1" type="primary">pdxH</name>
    <name type="ordered locus">RPB_1205</name>
</gene>
<accession>Q2J0U5</accession>
<sequence>MSDTSIKQQSQLTSGDFTAAENPFELFAEWLAEADRSEPNDPNAMALATVDSDGLPDVRMVLMKGYDADGFVFYSHIASQKGRELTANPKAALLFHWKSLRRQVRIRGTVTPVSDAEADAYFATRPKQAQIGAWASKQSQPLESRFAFEQAIAKVAARYLIGEVPRPPGWSGWRITPSRVEFWHDRPFRLHDRIEFNRDTPAQPWTKTRLYP</sequence>
<feature type="chain" id="PRO_0000255885" description="Pyridoxine/pyridoxamine 5'-phosphate oxidase">
    <location>
        <begin position="1"/>
        <end position="212"/>
    </location>
</feature>
<feature type="binding site" evidence="1">
    <location>
        <begin position="59"/>
        <end position="64"/>
    </location>
    <ligand>
        <name>FMN</name>
        <dbReference type="ChEBI" id="CHEBI:58210"/>
    </ligand>
</feature>
<feature type="binding site" evidence="1">
    <location>
        <position position="64"/>
    </location>
    <ligand>
        <name>substrate</name>
    </ligand>
</feature>
<feature type="binding site" evidence="1">
    <location>
        <begin position="74"/>
        <end position="75"/>
    </location>
    <ligand>
        <name>FMN</name>
        <dbReference type="ChEBI" id="CHEBI:58210"/>
    </ligand>
</feature>
<feature type="binding site" evidence="1">
    <location>
        <position position="81"/>
    </location>
    <ligand>
        <name>FMN</name>
        <dbReference type="ChEBI" id="CHEBI:58210"/>
    </ligand>
</feature>
<feature type="binding site" evidence="1">
    <location>
        <position position="103"/>
    </location>
    <ligand>
        <name>FMN</name>
        <dbReference type="ChEBI" id="CHEBI:58210"/>
    </ligand>
</feature>
<feature type="binding site" evidence="1">
    <location>
        <position position="121"/>
    </location>
    <ligand>
        <name>substrate</name>
    </ligand>
</feature>
<feature type="binding site" evidence="1">
    <location>
        <position position="125"/>
    </location>
    <ligand>
        <name>substrate</name>
    </ligand>
</feature>
<feature type="binding site" evidence="1">
    <location>
        <begin position="138"/>
        <end position="139"/>
    </location>
    <ligand>
        <name>FMN</name>
        <dbReference type="ChEBI" id="CHEBI:58210"/>
    </ligand>
</feature>
<feature type="binding site" evidence="1">
    <location>
        <position position="183"/>
    </location>
    <ligand>
        <name>FMN</name>
        <dbReference type="ChEBI" id="CHEBI:58210"/>
    </ligand>
</feature>
<feature type="binding site" evidence="1">
    <location>
        <begin position="189"/>
        <end position="191"/>
    </location>
    <ligand>
        <name>substrate</name>
    </ligand>
</feature>
<feature type="binding site" evidence="1">
    <location>
        <position position="193"/>
    </location>
    <ligand>
        <name>FMN</name>
        <dbReference type="ChEBI" id="CHEBI:58210"/>
    </ligand>
</feature>
<reference key="1">
    <citation type="submission" date="2006-01" db="EMBL/GenBank/DDBJ databases">
        <title>Complete sequence of Rhodopseudomonas palustris HaA2.</title>
        <authorList>
            <consortium name="US DOE Joint Genome Institute"/>
            <person name="Copeland A."/>
            <person name="Lucas S."/>
            <person name="Lapidus A."/>
            <person name="Barry K."/>
            <person name="Detter J.C."/>
            <person name="Glavina T."/>
            <person name="Hammon N."/>
            <person name="Israni S."/>
            <person name="Pitluck S."/>
            <person name="Chain P."/>
            <person name="Malfatti S."/>
            <person name="Shin M."/>
            <person name="Vergez L."/>
            <person name="Schmutz J."/>
            <person name="Larimer F."/>
            <person name="Land M."/>
            <person name="Hauser L."/>
            <person name="Pelletier D.A."/>
            <person name="Kyrpides N."/>
            <person name="Anderson I."/>
            <person name="Oda Y."/>
            <person name="Harwood C.S."/>
            <person name="Richardson P."/>
        </authorList>
    </citation>
    <scope>NUCLEOTIDE SEQUENCE [LARGE SCALE GENOMIC DNA]</scope>
    <source>
        <strain>HaA2</strain>
    </source>
</reference>
<dbReference type="EC" id="1.4.3.5" evidence="1"/>
<dbReference type="EMBL" id="CP000250">
    <property type="protein sequence ID" value="ABD05915.1"/>
    <property type="molecule type" value="Genomic_DNA"/>
</dbReference>
<dbReference type="RefSeq" id="WP_011440104.1">
    <property type="nucleotide sequence ID" value="NC_007778.1"/>
</dbReference>
<dbReference type="SMR" id="Q2J0U5"/>
<dbReference type="STRING" id="316058.RPB_1205"/>
<dbReference type="KEGG" id="rpb:RPB_1205"/>
<dbReference type="eggNOG" id="COG0259">
    <property type="taxonomic scope" value="Bacteria"/>
</dbReference>
<dbReference type="HOGENOM" id="CLU_032263_2_3_5"/>
<dbReference type="OrthoDB" id="9780392at2"/>
<dbReference type="UniPathway" id="UPA01068">
    <property type="reaction ID" value="UER00304"/>
</dbReference>
<dbReference type="UniPathway" id="UPA01068">
    <property type="reaction ID" value="UER00305"/>
</dbReference>
<dbReference type="Proteomes" id="UP000008809">
    <property type="component" value="Chromosome"/>
</dbReference>
<dbReference type="GO" id="GO:0010181">
    <property type="term" value="F:FMN binding"/>
    <property type="evidence" value="ECO:0007669"/>
    <property type="project" value="UniProtKB-UniRule"/>
</dbReference>
<dbReference type="GO" id="GO:0004733">
    <property type="term" value="F:pyridoxamine phosphate oxidase activity"/>
    <property type="evidence" value="ECO:0007669"/>
    <property type="project" value="UniProtKB-UniRule"/>
</dbReference>
<dbReference type="GO" id="GO:0008615">
    <property type="term" value="P:pyridoxine biosynthetic process"/>
    <property type="evidence" value="ECO:0007669"/>
    <property type="project" value="UniProtKB-KW"/>
</dbReference>
<dbReference type="FunFam" id="2.30.110.10:FF:000012">
    <property type="entry name" value="Predicted protein"/>
    <property type="match status" value="1"/>
</dbReference>
<dbReference type="Gene3D" id="2.30.110.10">
    <property type="entry name" value="Electron Transport, Fmn-binding Protein, Chain A"/>
    <property type="match status" value="1"/>
</dbReference>
<dbReference type="HAMAP" id="MF_01629">
    <property type="entry name" value="PdxH"/>
    <property type="match status" value="1"/>
</dbReference>
<dbReference type="InterPro" id="IPR000659">
    <property type="entry name" value="Pyridox_Oxase"/>
</dbReference>
<dbReference type="InterPro" id="IPR019740">
    <property type="entry name" value="Pyridox_Oxase_CS"/>
</dbReference>
<dbReference type="InterPro" id="IPR011576">
    <property type="entry name" value="Pyridox_Oxase_N"/>
</dbReference>
<dbReference type="InterPro" id="IPR019576">
    <property type="entry name" value="Pyridoxamine_oxidase_dimer_C"/>
</dbReference>
<dbReference type="InterPro" id="IPR012349">
    <property type="entry name" value="Split_barrel_FMN-bd"/>
</dbReference>
<dbReference type="NCBIfam" id="TIGR00558">
    <property type="entry name" value="pdxH"/>
    <property type="match status" value="1"/>
</dbReference>
<dbReference type="NCBIfam" id="NF004231">
    <property type="entry name" value="PRK05679.1"/>
    <property type="match status" value="1"/>
</dbReference>
<dbReference type="PANTHER" id="PTHR10851:SF0">
    <property type="entry name" value="PYRIDOXINE-5'-PHOSPHATE OXIDASE"/>
    <property type="match status" value="1"/>
</dbReference>
<dbReference type="PANTHER" id="PTHR10851">
    <property type="entry name" value="PYRIDOXINE-5-PHOSPHATE OXIDASE"/>
    <property type="match status" value="1"/>
</dbReference>
<dbReference type="Pfam" id="PF10590">
    <property type="entry name" value="PNP_phzG_C"/>
    <property type="match status" value="1"/>
</dbReference>
<dbReference type="Pfam" id="PF01243">
    <property type="entry name" value="PNPOx_N"/>
    <property type="match status" value="1"/>
</dbReference>
<dbReference type="PIRSF" id="PIRSF000190">
    <property type="entry name" value="Pyd_amn-ph_oxd"/>
    <property type="match status" value="1"/>
</dbReference>
<dbReference type="SUPFAM" id="SSF50475">
    <property type="entry name" value="FMN-binding split barrel"/>
    <property type="match status" value="1"/>
</dbReference>
<dbReference type="PROSITE" id="PS01064">
    <property type="entry name" value="PYRIDOX_OXIDASE"/>
    <property type="match status" value="1"/>
</dbReference>
<proteinExistence type="inferred from homology"/>
<name>PDXH_RHOP2</name>
<evidence type="ECO:0000255" key="1">
    <source>
        <dbReference type="HAMAP-Rule" id="MF_01629"/>
    </source>
</evidence>
<keyword id="KW-0285">Flavoprotein</keyword>
<keyword id="KW-0288">FMN</keyword>
<keyword id="KW-0560">Oxidoreductase</keyword>
<keyword id="KW-0664">Pyridoxine biosynthesis</keyword>
<keyword id="KW-1185">Reference proteome</keyword>
<protein>
    <recommendedName>
        <fullName evidence="1">Pyridoxine/pyridoxamine 5'-phosphate oxidase</fullName>
        <ecNumber evidence="1">1.4.3.5</ecNumber>
    </recommendedName>
    <alternativeName>
        <fullName evidence="1">PNP/PMP oxidase</fullName>
        <shortName evidence="1">PNPOx</shortName>
    </alternativeName>
    <alternativeName>
        <fullName evidence="1">Pyridoxal 5'-phosphate synthase</fullName>
    </alternativeName>
</protein>